<gene>
    <name evidence="1" type="primary">psbF</name>
</gene>
<geneLocation type="chloroplast"/>
<organism>
    <name type="scientific">Anthoceros angustus</name>
    <name type="common">Hornwort</name>
    <name type="synonym">Anthoceros formosae</name>
    <dbReference type="NCBI Taxonomy" id="48387"/>
    <lineage>
        <taxon>Eukaryota</taxon>
        <taxon>Viridiplantae</taxon>
        <taxon>Streptophyta</taxon>
        <taxon>Embryophyta</taxon>
        <taxon>Anthocerotophyta</taxon>
        <taxon>Anthocerotopsida</taxon>
        <taxon>Anthocerotidae</taxon>
        <taxon>Anthocerotales</taxon>
        <taxon>Anthocerotaceae</taxon>
        <taxon>Anthoceros</taxon>
    </lineage>
</organism>
<keyword id="KW-0150">Chloroplast</keyword>
<keyword id="KW-0249">Electron transport</keyword>
<keyword id="KW-0349">Heme</keyword>
<keyword id="KW-0408">Iron</keyword>
<keyword id="KW-0472">Membrane</keyword>
<keyword id="KW-0479">Metal-binding</keyword>
<keyword id="KW-0602">Photosynthesis</keyword>
<keyword id="KW-0604">Photosystem II</keyword>
<keyword id="KW-0934">Plastid</keyword>
<keyword id="KW-0691">RNA editing</keyword>
<keyword id="KW-0793">Thylakoid</keyword>
<keyword id="KW-0812">Transmembrane</keyword>
<keyword id="KW-1133">Transmembrane helix</keyword>
<keyword id="KW-0813">Transport</keyword>
<dbReference type="EMBL" id="AB086179">
    <property type="protein sequence ID" value="BAC55365.1"/>
    <property type="molecule type" value="Genomic_DNA"/>
</dbReference>
<dbReference type="EMBL" id="AB087455">
    <property type="protein sequence ID" value="BAC55461.1"/>
    <property type="molecule type" value="mRNA"/>
</dbReference>
<dbReference type="RefSeq" id="NP_777429.1">
    <property type="nucleotide sequence ID" value="NC_004543.1"/>
</dbReference>
<dbReference type="SMR" id="P60249"/>
<dbReference type="GeneID" id="2553401"/>
<dbReference type="GO" id="GO:0009535">
    <property type="term" value="C:chloroplast thylakoid membrane"/>
    <property type="evidence" value="ECO:0007669"/>
    <property type="project" value="UniProtKB-SubCell"/>
</dbReference>
<dbReference type="GO" id="GO:0009539">
    <property type="term" value="C:photosystem II reaction center"/>
    <property type="evidence" value="ECO:0007669"/>
    <property type="project" value="InterPro"/>
</dbReference>
<dbReference type="GO" id="GO:0009055">
    <property type="term" value="F:electron transfer activity"/>
    <property type="evidence" value="ECO:0007669"/>
    <property type="project" value="UniProtKB-UniRule"/>
</dbReference>
<dbReference type="GO" id="GO:0020037">
    <property type="term" value="F:heme binding"/>
    <property type="evidence" value="ECO:0007669"/>
    <property type="project" value="InterPro"/>
</dbReference>
<dbReference type="GO" id="GO:0005506">
    <property type="term" value="F:iron ion binding"/>
    <property type="evidence" value="ECO:0007669"/>
    <property type="project" value="UniProtKB-UniRule"/>
</dbReference>
<dbReference type="GO" id="GO:0009767">
    <property type="term" value="P:photosynthetic electron transport chain"/>
    <property type="evidence" value="ECO:0007669"/>
    <property type="project" value="InterPro"/>
</dbReference>
<dbReference type="HAMAP" id="MF_00643">
    <property type="entry name" value="PSII_PsbF"/>
    <property type="match status" value="1"/>
</dbReference>
<dbReference type="InterPro" id="IPR006241">
    <property type="entry name" value="PSII_cyt_b559_bsu"/>
</dbReference>
<dbReference type="InterPro" id="IPR006216">
    <property type="entry name" value="PSII_cyt_b559_CS"/>
</dbReference>
<dbReference type="InterPro" id="IPR013081">
    <property type="entry name" value="PSII_cyt_b559_N"/>
</dbReference>
<dbReference type="NCBIfam" id="TIGR01333">
    <property type="entry name" value="cyt_b559_beta"/>
    <property type="match status" value="1"/>
</dbReference>
<dbReference type="Pfam" id="PF00283">
    <property type="entry name" value="Cytochrom_B559"/>
    <property type="match status" value="1"/>
</dbReference>
<dbReference type="PIRSF" id="PIRSF000037">
    <property type="entry name" value="PsbF"/>
    <property type="match status" value="1"/>
</dbReference>
<dbReference type="SUPFAM" id="SSF161045">
    <property type="entry name" value="Cytochrome b559 subunits"/>
    <property type="match status" value="1"/>
</dbReference>
<dbReference type="PROSITE" id="PS00537">
    <property type="entry name" value="CYTOCHROME_B559"/>
    <property type="match status" value="1"/>
</dbReference>
<reference key="1">
    <citation type="journal article" date="2003" name="Nucleic Acids Res.">
        <title>The complete nucleotide sequence of the hornwort (Anthoceros formosae) chloroplast genome: insight into the earliest land plants.</title>
        <authorList>
            <person name="Kugita M."/>
            <person name="Kaneko A."/>
            <person name="Yamamoto Y."/>
            <person name="Takeya Y."/>
            <person name="Matsumoto T."/>
            <person name="Yoshinaga K."/>
        </authorList>
    </citation>
    <scope>NUCLEOTIDE SEQUENCE [LARGE SCALE GENOMIC DNA]</scope>
    <scope>RNA EDITING</scope>
</reference>
<reference key="2">
    <citation type="journal article" date="2003" name="Nucleic Acids Res.">
        <title>RNA editing in hornwort chloroplasts makes more than half the genes functional.</title>
        <authorList>
            <person name="Kugita M."/>
            <person name="Yamamoto Y."/>
            <person name="Fujikawa T."/>
            <person name="Matsumoto T."/>
            <person name="Yoshinaga K."/>
        </authorList>
    </citation>
    <scope>NUCLEOTIDE SEQUENCE [MRNA]</scope>
    <scope>RNA EDITING</scope>
    <source>
        <tissue>Thallus</tissue>
    </source>
</reference>
<feature type="chain" id="PRO_0000200354" description="Cytochrome b559 subunit beta">
    <location>
        <begin position="1"/>
        <end position="39"/>
    </location>
</feature>
<feature type="transmembrane region" description="Helical" evidence="1">
    <location>
        <begin position="14"/>
        <end position="30"/>
    </location>
</feature>
<feature type="binding site" description="axial binding residue" evidence="1">
    <location>
        <position position="18"/>
    </location>
    <ligand>
        <name>heme</name>
        <dbReference type="ChEBI" id="CHEBI:30413"/>
        <note>ligand shared with alpha subunit</note>
    </ligand>
    <ligandPart>
        <name>Fe</name>
        <dbReference type="ChEBI" id="CHEBI:18248"/>
    </ligandPart>
</feature>
<accession>P60249</accession>
<proteinExistence type="evidence at transcript level"/>
<evidence type="ECO:0000255" key="1">
    <source>
        <dbReference type="HAMAP-Rule" id="MF_00643"/>
    </source>
</evidence>
<evidence type="ECO:0000269" key="2">
    <source>
    </source>
</evidence>
<evidence type="ECO:0000269" key="3">
    <source>
    </source>
</evidence>
<sequence>MTIDRTYPIFTVRWLAVHGLAVPTVFFLGSISAMQFIQR</sequence>
<name>PSBF_ANTAG</name>
<protein>
    <recommendedName>
        <fullName evidence="1">Cytochrome b559 subunit beta</fullName>
    </recommendedName>
    <alternativeName>
        <fullName evidence="1">PSII reaction center subunit VI</fullName>
    </alternativeName>
</protein>
<comment type="function">
    <text evidence="1">This b-type cytochrome is tightly associated with the reaction center of photosystem II (PSII). PSII is a light-driven water:plastoquinone oxidoreductase that uses light energy to abstract electrons from H(2)O, generating O(2) and a proton gradient subsequently used for ATP formation. It consists of a core antenna complex that captures photons, and an electron transfer chain that converts photonic excitation into a charge separation.</text>
</comment>
<comment type="cofactor">
    <cofactor evidence="1">
        <name>heme b</name>
        <dbReference type="ChEBI" id="CHEBI:60344"/>
    </cofactor>
    <text evidence="1">With its partner (PsbE) binds heme. PSII binds additional chlorophylls, carotenoids and specific lipids.</text>
</comment>
<comment type="subunit">
    <text evidence="1">Heterodimer of an alpha subunit and a beta subunit. PSII is composed of 1 copy each of membrane proteins PsbA, PsbB, PsbC, PsbD, PsbE, PsbF, PsbH, PsbI, PsbJ, PsbK, PsbL, PsbM, PsbT, PsbX, PsbY, PsbZ, Psb30/Ycf12, at least 3 peripheral proteins of the oxygen-evolving complex and a large number of cofactors. It forms dimeric complexes.</text>
</comment>
<comment type="subcellular location">
    <subcellularLocation>
        <location evidence="1">Plastid</location>
        <location evidence="1">Chloroplast thylakoid membrane</location>
        <topology evidence="1">Single-pass membrane protein</topology>
    </subcellularLocation>
</comment>
<comment type="RNA editing">
    <location>
        <position position="23" evidence="2 3"/>
    </location>
    <location>
        <position position="26" evidence="2 3"/>
    </location>
    <location>
        <position position="27" evidence="2 3"/>
    </location>
    <location>
        <position position="28" evidence="2 3"/>
    </location>
    <location>
        <position position="33" evidence="2 3"/>
    </location>
</comment>
<comment type="similarity">
    <text evidence="1">Belongs to the PsbE/PsbF family.</text>
</comment>